<keyword id="KW-0963">Cytoplasm</keyword>
<keyword id="KW-0444">Lipid biosynthesis</keyword>
<keyword id="KW-0443">Lipid metabolism</keyword>
<keyword id="KW-0594">Phospholipid biosynthesis</keyword>
<keyword id="KW-1208">Phospholipid metabolism</keyword>
<keyword id="KW-0808">Transferase</keyword>
<dbReference type="EC" id="2.3.1.274" evidence="1"/>
<dbReference type="EMBL" id="CP000726">
    <property type="protein sequence ID" value="ABS34223.1"/>
    <property type="molecule type" value="Genomic_DNA"/>
</dbReference>
<dbReference type="RefSeq" id="WP_003396953.1">
    <property type="nucleotide sequence ID" value="NC_009697.1"/>
</dbReference>
<dbReference type="SMR" id="A7FW21"/>
<dbReference type="KEGG" id="cba:CLB_2321"/>
<dbReference type="HOGENOM" id="CLU_039379_1_1_9"/>
<dbReference type="UniPathway" id="UPA00085"/>
<dbReference type="GO" id="GO:0005737">
    <property type="term" value="C:cytoplasm"/>
    <property type="evidence" value="ECO:0007669"/>
    <property type="project" value="UniProtKB-SubCell"/>
</dbReference>
<dbReference type="GO" id="GO:0043811">
    <property type="term" value="F:phosphate:acyl-[acyl carrier protein] acyltransferase activity"/>
    <property type="evidence" value="ECO:0007669"/>
    <property type="project" value="UniProtKB-UniRule"/>
</dbReference>
<dbReference type="GO" id="GO:0006633">
    <property type="term" value="P:fatty acid biosynthetic process"/>
    <property type="evidence" value="ECO:0007669"/>
    <property type="project" value="UniProtKB-UniRule"/>
</dbReference>
<dbReference type="GO" id="GO:0008654">
    <property type="term" value="P:phospholipid biosynthetic process"/>
    <property type="evidence" value="ECO:0007669"/>
    <property type="project" value="UniProtKB-KW"/>
</dbReference>
<dbReference type="Gene3D" id="3.40.718.10">
    <property type="entry name" value="Isopropylmalate Dehydrogenase"/>
    <property type="match status" value="1"/>
</dbReference>
<dbReference type="HAMAP" id="MF_00019">
    <property type="entry name" value="PlsX"/>
    <property type="match status" value="1"/>
</dbReference>
<dbReference type="InterPro" id="IPR003664">
    <property type="entry name" value="FA_synthesis"/>
</dbReference>
<dbReference type="InterPro" id="IPR012281">
    <property type="entry name" value="Phospholipid_synth_PlsX-like"/>
</dbReference>
<dbReference type="NCBIfam" id="TIGR00182">
    <property type="entry name" value="plsX"/>
    <property type="match status" value="1"/>
</dbReference>
<dbReference type="PANTHER" id="PTHR30100">
    <property type="entry name" value="FATTY ACID/PHOSPHOLIPID SYNTHESIS PROTEIN PLSX"/>
    <property type="match status" value="1"/>
</dbReference>
<dbReference type="PANTHER" id="PTHR30100:SF1">
    <property type="entry name" value="PHOSPHATE ACYLTRANSFERASE"/>
    <property type="match status" value="1"/>
</dbReference>
<dbReference type="Pfam" id="PF02504">
    <property type="entry name" value="FA_synthesis"/>
    <property type="match status" value="1"/>
</dbReference>
<dbReference type="PIRSF" id="PIRSF002465">
    <property type="entry name" value="Phsphlp_syn_PlsX"/>
    <property type="match status" value="1"/>
</dbReference>
<dbReference type="SUPFAM" id="SSF53659">
    <property type="entry name" value="Isocitrate/Isopropylmalate dehydrogenase-like"/>
    <property type="match status" value="1"/>
</dbReference>
<proteinExistence type="inferred from homology"/>
<name>PLSX_CLOB1</name>
<feature type="chain" id="PRO_1000001746" description="Phosphate acyltransferase">
    <location>
        <begin position="1"/>
        <end position="335"/>
    </location>
</feature>
<accession>A7FW21</accession>
<gene>
    <name evidence="1" type="primary">plsX</name>
    <name type="ordered locus">CLB_2321</name>
</gene>
<organism>
    <name type="scientific">Clostridium botulinum (strain ATCC 19397 / Type A)</name>
    <dbReference type="NCBI Taxonomy" id="441770"/>
    <lineage>
        <taxon>Bacteria</taxon>
        <taxon>Bacillati</taxon>
        <taxon>Bacillota</taxon>
        <taxon>Clostridia</taxon>
        <taxon>Eubacteriales</taxon>
        <taxon>Clostridiaceae</taxon>
        <taxon>Clostridium</taxon>
    </lineage>
</organism>
<evidence type="ECO:0000255" key="1">
    <source>
        <dbReference type="HAMAP-Rule" id="MF_00019"/>
    </source>
</evidence>
<comment type="function">
    <text evidence="1">Catalyzes the reversible formation of acyl-phosphate (acyl-PO(4)) from acyl-[acyl-carrier-protein] (acyl-ACP). This enzyme utilizes acyl-ACP as fatty acyl donor, but not acyl-CoA.</text>
</comment>
<comment type="catalytic activity">
    <reaction evidence="1">
        <text>a fatty acyl-[ACP] + phosphate = an acyl phosphate + holo-[ACP]</text>
        <dbReference type="Rhea" id="RHEA:42292"/>
        <dbReference type="Rhea" id="RHEA-COMP:9685"/>
        <dbReference type="Rhea" id="RHEA-COMP:14125"/>
        <dbReference type="ChEBI" id="CHEBI:43474"/>
        <dbReference type="ChEBI" id="CHEBI:59918"/>
        <dbReference type="ChEBI" id="CHEBI:64479"/>
        <dbReference type="ChEBI" id="CHEBI:138651"/>
        <dbReference type="EC" id="2.3.1.274"/>
    </reaction>
</comment>
<comment type="pathway">
    <text evidence="1">Lipid metabolism; phospholipid metabolism.</text>
</comment>
<comment type="subunit">
    <text evidence="1">Homodimer. Probably interacts with PlsY.</text>
</comment>
<comment type="subcellular location">
    <subcellularLocation>
        <location evidence="1">Cytoplasm</location>
    </subcellularLocation>
    <text evidence="1">Associated with the membrane possibly through PlsY.</text>
</comment>
<comment type="similarity">
    <text evidence="1">Belongs to the PlsX family.</text>
</comment>
<sequence length="335" mass="36205">MIIAVDGMGGDFAPELVVEGCIQAVKEYEGIHIIITGKKELIKNELDKREYNGNKIEILNAEEVISTNEAPVKAIRRKKDSSMVKALELVKEGKAQAVISAGSTGALMAGATFVLGRIKGINRVCLAPLLPGAKAPFMIADAGANVDCKAEYLVQFAMMGKVYFESVLGVKSPTVGLVNIGAEEEKGNELTKAAYKLLKDTDFNFIGNIEPRDIPRGEVNIAVCDGFIGNTVLKTYEGVASNLFSMLKKEIMASTRGKIGGALLKPVFKDFKKKFDYTEYGGSPFLGAKGICIKAHGSSDAKAFKNAIRQAKICYDKKIIEEIENNLGNLIENNI</sequence>
<reference key="1">
    <citation type="journal article" date="2007" name="PLoS ONE">
        <title>Analysis of the neurotoxin complex genes in Clostridium botulinum A1-A4 and B1 strains: BoNT/A3, /Ba4 and /B1 clusters are located within plasmids.</title>
        <authorList>
            <person name="Smith T.J."/>
            <person name="Hill K.K."/>
            <person name="Foley B.T."/>
            <person name="Detter J.C."/>
            <person name="Munk A.C."/>
            <person name="Bruce D.C."/>
            <person name="Doggett N.A."/>
            <person name="Smith L.A."/>
            <person name="Marks J.D."/>
            <person name="Xie G."/>
            <person name="Brettin T.S."/>
        </authorList>
    </citation>
    <scope>NUCLEOTIDE SEQUENCE [LARGE SCALE GENOMIC DNA]</scope>
    <source>
        <strain>ATCC 19397 / Type A</strain>
    </source>
</reference>
<protein>
    <recommendedName>
        <fullName evidence="1">Phosphate acyltransferase</fullName>
        <ecNumber evidence="1">2.3.1.274</ecNumber>
    </recommendedName>
    <alternativeName>
        <fullName evidence="1">Acyl-ACP phosphotransacylase</fullName>
    </alternativeName>
    <alternativeName>
        <fullName evidence="1">Acyl-[acyl-carrier-protein]--phosphate acyltransferase</fullName>
    </alternativeName>
    <alternativeName>
        <fullName evidence="1">Phosphate-acyl-ACP acyltransferase</fullName>
    </alternativeName>
</protein>